<feature type="initiator methionine" description="Removed" evidence="2">
    <location>
        <position position="1"/>
    </location>
</feature>
<feature type="chain" id="PRO_0000209694" description="Heme oxygenase 2">
    <location>
        <begin position="2"/>
        <end position="315"/>
    </location>
</feature>
<feature type="chain" id="PRO_0000455628" description="Heme oxygenase 2 soluble form" evidence="2">
    <location>
        <begin position="2"/>
        <end position="294"/>
    </location>
</feature>
<feature type="topological domain" description="Cytoplasmic" evidence="1">
    <location>
        <begin position="2"/>
        <end position="294"/>
    </location>
</feature>
<feature type="transmembrane region" description="Helical; Anchor for type IV membrane protein" evidence="3">
    <location>
        <begin position="295"/>
        <end position="315"/>
    </location>
</feature>
<feature type="repeat" description="HRM 1">
    <location>
        <begin position="263"/>
        <end position="268"/>
    </location>
</feature>
<feature type="repeat" description="HRM 2">
    <location>
        <begin position="280"/>
        <end position="285"/>
    </location>
</feature>
<feature type="region of interest" description="Disordered" evidence="4">
    <location>
        <begin position="1"/>
        <end position="29"/>
    </location>
</feature>
<feature type="compositionally biased region" description="Polar residues" evidence="4">
    <location>
        <begin position="1"/>
        <end position="15"/>
    </location>
</feature>
<feature type="binding site" description="axial binding residue" evidence="2">
    <location>
        <position position="44"/>
    </location>
    <ligand>
        <name>heme b</name>
        <dbReference type="ChEBI" id="CHEBI:60344"/>
    </ligand>
    <ligandPart>
        <name>Fe</name>
        <dbReference type="ChEBI" id="CHEBI:18248"/>
    </ligandPart>
</feature>
<feature type="binding site" evidence="2">
    <location>
        <position position="153"/>
    </location>
    <ligand>
        <name>heme b</name>
        <dbReference type="ChEBI" id="CHEBI:60344"/>
    </ligand>
</feature>
<feature type="binding site" evidence="2">
    <location>
        <position position="198"/>
    </location>
    <ligand>
        <name>heme b</name>
        <dbReference type="ChEBI" id="CHEBI:60344"/>
    </ligand>
</feature>
<feature type="binding site" evidence="2">
    <location>
        <position position="202"/>
    </location>
    <ligand>
        <name>heme b</name>
        <dbReference type="ChEBI" id="CHEBI:60344"/>
    </ligand>
</feature>
<feature type="site" description="Important for catalytic activity" evidence="1">
    <location>
        <position position="159"/>
    </location>
</feature>
<feature type="modified residue" description="N-acetylserine" evidence="2">
    <location>
        <position position="2"/>
    </location>
</feature>
<feature type="modified residue" description="Phosphoserine" evidence="2">
    <location>
        <position position="2"/>
    </location>
</feature>
<feature type="modified residue" description="S-nitrosocysteine" evidence="2">
    <location>
        <position position="264"/>
    </location>
</feature>
<feature type="modified residue" description="S-nitrosocysteine" evidence="2">
    <location>
        <position position="281"/>
    </location>
</feature>
<feature type="sequence conflict" description="In Ref. 4; AAA41347." evidence="9" ref="4">
    <original>QNEPE</original>
    <variation>EFRNK</variation>
    <location>
        <begin position="142"/>
        <end position="146"/>
    </location>
</feature>
<feature type="sequence conflict" description="In Ref. 4; AAA41347." evidence="9" ref="4">
    <original>MQI</original>
    <variation>TEF</variation>
    <location>
        <begin position="230"/>
        <end position="232"/>
    </location>
</feature>
<keyword id="KW-0007">Acetylation</keyword>
<keyword id="KW-0903">Direct protein sequencing</keyword>
<keyword id="KW-0256">Endoplasmic reticulum</keyword>
<keyword id="KW-0349">Heme</keyword>
<keyword id="KW-0408">Iron</keyword>
<keyword id="KW-0472">Membrane</keyword>
<keyword id="KW-0479">Metal-binding</keyword>
<keyword id="KW-0492">Microsome</keyword>
<keyword id="KW-0560">Oxidoreductase</keyword>
<keyword id="KW-0597">Phosphoprotein</keyword>
<keyword id="KW-1185">Reference proteome</keyword>
<keyword id="KW-0677">Repeat</keyword>
<keyword id="KW-0702">S-nitrosylation</keyword>
<keyword id="KW-0812">Transmembrane</keyword>
<keyword id="KW-1133">Transmembrane helix</keyword>
<gene>
    <name type="primary">Hmox2</name>
</gene>
<reference key="1">
    <citation type="journal article" date="1990" name="J. Biol. Chem.">
        <title>Isolation, characterization, and expression in Escherichia coli of a cDNA encoding rat heme oxygenase-2.</title>
        <authorList>
            <person name="Rotenberg M.O."/>
            <person name="Maines M.D."/>
        </authorList>
    </citation>
    <scope>NUCLEOTIDE SEQUENCE [MRNA]</scope>
    <scope>FUNCTION</scope>
    <scope>CATALYTIC ACTIVITY</scope>
    <source>
        <tissue>Testis</tissue>
    </source>
</reference>
<reference key="2">
    <citation type="journal article" date="1994" name="Gene">
        <title>The structure, organization and differential expression of the gene encoding rat heme oxygenase-2.</title>
        <authorList>
            <person name="McCoubrey W.K. Jr."/>
            <person name="Maines M.D."/>
        </authorList>
    </citation>
    <scope>NUCLEOTIDE SEQUENCE [GENOMIC DNA]</scope>
    <scope>TISSUE SPECIFICITY</scope>
    <source>
        <strain>Sprague-Dawley</strain>
        <tissue>Liver</tissue>
    </source>
</reference>
<reference key="3">
    <citation type="journal article" date="2004" name="Genome Res.">
        <title>The status, quality, and expansion of the NIH full-length cDNA project: the Mammalian Gene Collection (MGC).</title>
        <authorList>
            <consortium name="The MGC Project Team"/>
        </authorList>
    </citation>
    <scope>NUCLEOTIDE SEQUENCE [LARGE SCALE MRNA]</scope>
    <source>
        <tissue>Prostate</tissue>
    </source>
</reference>
<reference key="4">
    <citation type="journal article" date="1988" name="J. Biol. Chem.">
        <title>Evidence suggesting that the two forms of heme oxygenase are products of different genes.</title>
        <authorList>
            <person name="Cruse I."/>
            <person name="Maines M.D."/>
        </authorList>
    </citation>
    <scope>NUCLEOTIDE SEQUENCE [MRNA] OF 142-232</scope>
    <scope>PARTIAL PROTEIN SEQUENCE</scope>
    <scope>INDUCTION</scope>
    <source>
        <tissue>Liver</tissue>
        <tissue>Testis</tissue>
    </source>
</reference>
<reference key="5">
    <citation type="journal article" date="1992" name="Arch. Biochem. Biophys.">
        <title>Human heme oxygenase-2: characterization and expression of a full-length cDNA and evidence suggesting that the two HO-2 transcripts may differ by choice of polyadenylation signal.</title>
        <authorList>
            <person name="McCoubrey W.K. Jr."/>
            <person name="Ewing J.F."/>
            <person name="Maines M.D."/>
        </authorList>
    </citation>
    <scope>FUNCTION</scope>
    <scope>CATALYTIC ACTIVITY</scope>
    <scope>ACTIVITY REGULATION</scope>
</reference>
<reference key="6">
    <citation type="journal article" date="2012" name="Nat. Commun.">
        <title>Quantitative maps of protein phosphorylation sites across 14 different rat organs and tissues.</title>
        <authorList>
            <person name="Lundby A."/>
            <person name="Secher A."/>
            <person name="Lage K."/>
            <person name="Nordsborg N.B."/>
            <person name="Dmytriyev A."/>
            <person name="Lundby C."/>
            <person name="Olsen J.V."/>
        </authorList>
    </citation>
    <scope>IDENTIFICATION BY MASS SPECTROMETRY [LARGE SCALE ANALYSIS]</scope>
</reference>
<organism>
    <name type="scientific">Rattus norvegicus</name>
    <name type="common">Rat</name>
    <dbReference type="NCBI Taxonomy" id="10116"/>
    <lineage>
        <taxon>Eukaryota</taxon>
        <taxon>Metazoa</taxon>
        <taxon>Chordata</taxon>
        <taxon>Craniata</taxon>
        <taxon>Vertebrata</taxon>
        <taxon>Euteleostomi</taxon>
        <taxon>Mammalia</taxon>
        <taxon>Eutheria</taxon>
        <taxon>Euarchontoglires</taxon>
        <taxon>Glires</taxon>
        <taxon>Rodentia</taxon>
        <taxon>Myomorpha</taxon>
        <taxon>Muroidea</taxon>
        <taxon>Muridae</taxon>
        <taxon>Murinae</taxon>
        <taxon>Rattus</taxon>
    </lineage>
</organism>
<evidence type="ECO:0000250" key="1">
    <source>
        <dbReference type="UniProtKB" id="P09601"/>
    </source>
</evidence>
<evidence type="ECO:0000250" key="2">
    <source>
        <dbReference type="UniProtKB" id="P30519"/>
    </source>
</evidence>
<evidence type="ECO:0000255" key="3"/>
<evidence type="ECO:0000256" key="4">
    <source>
        <dbReference type="SAM" id="MobiDB-lite"/>
    </source>
</evidence>
<evidence type="ECO:0000269" key="5">
    <source>
    </source>
</evidence>
<evidence type="ECO:0000269" key="6">
    <source>
    </source>
</evidence>
<evidence type="ECO:0000269" key="7">
    <source>
    </source>
</evidence>
<evidence type="ECO:0000269" key="8">
    <source>
    </source>
</evidence>
<evidence type="ECO:0000305" key="9"/>
<evidence type="ECO:0000305" key="10">
    <source>
    </source>
</evidence>
<sequence length="315" mass="35762">MSSEVETSEGVDESENNSTAPEKENHTKMADLSELLKEGTKEAHDRAENTQFVKDFLKGNIKKELFKLATTALYFTYSALEEEMDRNKDHPAFAPLYFPTELHRKEALIKDMEYFFGENWEEQVKCSEAAQKYVDRIHYVGQNEPELLVAHAYTRYMGDLSGGQVLKKVAQRALKLPSTGEGTQFYLFEHVDNAQQFKQFYRARMNALDLSMKTKERIVEEANKAFEYNMQIFSELDQAGSMLTKETLEDGLPVHDGKGDVRKCPFYAAQPDKGTLGGSNCPFRTAMAVLRKPSLQLILAASVALVAGLLAWYYM</sequence>
<comment type="function">
    <molecule>Heme oxygenase 2</molecule>
    <text evidence="5 6">Catalyzes the oxidative cleavage of heme at the alpha-methene bridge carbon, released as carbon monoxide (CO), to generate biliverdin IXalpha, while releasing the central heme iron chelate as ferrous iron.</text>
</comment>
<comment type="function">
    <molecule>Heme oxygenase 2 soluble form</molecule>
    <text evidence="2">Catalyzes the oxidative cleavage of heme at the alpha-methene bridge carbon, released as carbon monoxide (CO), to generate biliverdin IXalpha, while releasing the central heme iron chelate as ferrous iron.</text>
</comment>
<comment type="catalytic activity">
    <reaction evidence="5 6">
        <text>heme b + 3 reduced [NADPH--hemoprotein reductase] + 3 O2 = biliverdin IXalpha + CO + Fe(2+) + 3 oxidized [NADPH--hemoprotein reductase] + 3 H2O + H(+)</text>
        <dbReference type="Rhea" id="RHEA:21764"/>
        <dbReference type="Rhea" id="RHEA-COMP:11964"/>
        <dbReference type="Rhea" id="RHEA-COMP:11965"/>
        <dbReference type="ChEBI" id="CHEBI:15377"/>
        <dbReference type="ChEBI" id="CHEBI:15378"/>
        <dbReference type="ChEBI" id="CHEBI:15379"/>
        <dbReference type="ChEBI" id="CHEBI:17245"/>
        <dbReference type="ChEBI" id="CHEBI:29033"/>
        <dbReference type="ChEBI" id="CHEBI:57618"/>
        <dbReference type="ChEBI" id="CHEBI:57991"/>
        <dbReference type="ChEBI" id="CHEBI:58210"/>
        <dbReference type="ChEBI" id="CHEBI:60344"/>
        <dbReference type="EC" id="1.14.14.18"/>
    </reaction>
    <physiologicalReaction direction="left-to-right" evidence="10">
        <dbReference type="Rhea" id="RHEA:21765"/>
    </physiologicalReaction>
</comment>
<comment type="activity regulation">
    <text evidence="5">Inhibited by metalloporphyrins such as Sn- and Zn-protoporphyrins.</text>
</comment>
<comment type="interaction">
    <interactant intactId="EBI-2910092">
        <id>P23711</id>
    </interactant>
    <interactant intactId="EBI-397530">
        <id>P62161</id>
        <label>Calm3</label>
    </interactant>
    <organismsDiffer>false</organismsDiffer>
    <experiments>2</experiments>
</comment>
<comment type="interaction">
    <interactant intactId="EBI-2910092">
        <id>P23711</id>
    </interactant>
    <interactant intactId="EBI-397403">
        <id>P62157</id>
        <label>CALM</label>
    </interactant>
    <organismsDiffer>true</organismsDiffer>
    <experiments>3</experiments>
</comment>
<comment type="subcellular location">
    <subcellularLocation>
        <location evidence="2">Microsome membrane</location>
        <topology evidence="3">Single-pass type IV membrane protein</topology>
        <orientation evidence="1">Cytoplasmic side</orientation>
    </subcellularLocation>
    <subcellularLocation>
        <location evidence="1">Endoplasmic reticulum membrane</location>
        <topology evidence="3">Single-pass type IV membrane protein</topology>
        <orientation evidence="1">Cytoplasmic side</orientation>
    </subcellularLocation>
</comment>
<comment type="tissue specificity">
    <text evidence="8">Widely distributed in body with a high concentration in the brain.</text>
</comment>
<comment type="induction">
    <text evidence="7">Heme oxygenase 2 activity is non-inducible.</text>
</comment>
<comment type="PTM">
    <text evidence="2">A soluble form arises by proteolytic removal of the membrane anchor.</text>
</comment>
<comment type="PTM">
    <text evidence="2">S-nitrosylated by BLVRB.</text>
</comment>
<comment type="similarity">
    <text evidence="9">Belongs to the heme oxygenase family.</text>
</comment>
<accession>P23711</accession>
<name>HMOX2_RAT</name>
<proteinExistence type="evidence at protein level"/>
<protein>
    <recommendedName>
        <fullName>Heme oxygenase 2</fullName>
        <shortName>HO-2</shortName>
        <ecNumber evidence="5 6">1.14.14.18</ecNumber>
    </recommendedName>
    <component>
        <recommendedName>
            <fullName evidence="2">Heme oxygenase 2 soluble form</fullName>
        </recommendedName>
    </component>
</protein>
<dbReference type="EC" id="1.14.14.18" evidence="5 6"/>
<dbReference type="EMBL" id="J05405">
    <property type="protein sequence ID" value="AAA41340.1"/>
    <property type="molecule type" value="mRNA"/>
</dbReference>
<dbReference type="EMBL" id="U05013">
    <property type="protein sequence ID" value="AAA19130.1"/>
    <property type="molecule type" value="Genomic_DNA"/>
</dbReference>
<dbReference type="EMBL" id="BC062061">
    <property type="protein sequence ID" value="AAH62061.1"/>
    <property type="molecule type" value="mRNA"/>
</dbReference>
<dbReference type="EMBL" id="M18918">
    <property type="protein sequence ID" value="AAA41347.1"/>
    <property type="molecule type" value="mRNA"/>
</dbReference>
<dbReference type="PIR" id="A35199">
    <property type="entry name" value="A35199"/>
</dbReference>
<dbReference type="RefSeq" id="NP_001264002.1">
    <property type="nucleotide sequence ID" value="NM_001277073.1"/>
</dbReference>
<dbReference type="RefSeq" id="NP_077363.1">
    <property type="nucleotide sequence ID" value="NM_024387.2"/>
</dbReference>
<dbReference type="RefSeq" id="XP_006245889.1">
    <property type="nucleotide sequence ID" value="XM_006245827.5"/>
</dbReference>
<dbReference type="RefSeq" id="XP_063125986.1">
    <property type="nucleotide sequence ID" value="XM_063269916.1"/>
</dbReference>
<dbReference type="SMR" id="P23711"/>
<dbReference type="FunCoup" id="P23711">
    <property type="interactions" value="2189"/>
</dbReference>
<dbReference type="IntAct" id="P23711">
    <property type="interactions" value="2"/>
</dbReference>
<dbReference type="STRING" id="10116.ENSRNOP00000005031"/>
<dbReference type="BindingDB" id="P23711"/>
<dbReference type="ChEMBL" id="CHEMBL3348"/>
<dbReference type="DrugCentral" id="P23711"/>
<dbReference type="GuidetoPHARMACOLOGY" id="1442"/>
<dbReference type="iPTMnet" id="P23711"/>
<dbReference type="PhosphoSitePlus" id="P23711"/>
<dbReference type="jPOST" id="P23711"/>
<dbReference type="PaxDb" id="10116-ENSRNOP00000005031"/>
<dbReference type="Ensembl" id="ENSRNOT00000005031.6">
    <property type="protein sequence ID" value="ENSRNOP00000005031.2"/>
    <property type="gene ID" value="ENSRNOG00000003773.7"/>
</dbReference>
<dbReference type="GeneID" id="79239"/>
<dbReference type="KEGG" id="rno:79239"/>
<dbReference type="UCSC" id="RGD:67402">
    <property type="organism name" value="rat"/>
</dbReference>
<dbReference type="AGR" id="RGD:67402"/>
<dbReference type="CTD" id="3163"/>
<dbReference type="RGD" id="67402">
    <property type="gene designation" value="Hmox2"/>
</dbReference>
<dbReference type="eggNOG" id="KOG4480">
    <property type="taxonomic scope" value="Eukaryota"/>
</dbReference>
<dbReference type="GeneTree" id="ENSGT00390000017673"/>
<dbReference type="InParanoid" id="P23711"/>
<dbReference type="OMA" id="NRAFEYN"/>
<dbReference type="OrthoDB" id="27566at9989"/>
<dbReference type="PhylomeDB" id="P23711"/>
<dbReference type="TreeFam" id="TF314786"/>
<dbReference type="BRENDA" id="1.14.14.18">
    <property type="organism ID" value="5301"/>
</dbReference>
<dbReference type="Reactome" id="R-RNO-189483">
    <property type="pathway name" value="Heme degradation"/>
</dbReference>
<dbReference type="Reactome" id="R-RNO-6798695">
    <property type="pathway name" value="Neutrophil degranulation"/>
</dbReference>
<dbReference type="Reactome" id="R-RNO-8980692">
    <property type="pathway name" value="RHOA GTPase cycle"/>
</dbReference>
<dbReference type="Reactome" id="R-RNO-917937">
    <property type="pathway name" value="Iron uptake and transport"/>
</dbReference>
<dbReference type="Reactome" id="R-RNO-9707564">
    <property type="pathway name" value="Cytoprotection by HMOX1"/>
</dbReference>
<dbReference type="SABIO-RK" id="P23711"/>
<dbReference type="PRO" id="PR:P23711"/>
<dbReference type="Proteomes" id="UP000002494">
    <property type="component" value="Chromosome 10"/>
</dbReference>
<dbReference type="Bgee" id="ENSRNOG00000003773">
    <property type="expression patterns" value="Expressed in testis and 20 other cell types or tissues"/>
</dbReference>
<dbReference type="GO" id="GO:0005789">
    <property type="term" value="C:endoplasmic reticulum membrane"/>
    <property type="evidence" value="ECO:0007669"/>
    <property type="project" value="UniProtKB-SubCell"/>
</dbReference>
<dbReference type="GO" id="GO:0005886">
    <property type="term" value="C:plasma membrane"/>
    <property type="evidence" value="ECO:0000266"/>
    <property type="project" value="RGD"/>
</dbReference>
<dbReference type="GO" id="GO:0020037">
    <property type="term" value="F:heme binding"/>
    <property type="evidence" value="ECO:0000318"/>
    <property type="project" value="GO_Central"/>
</dbReference>
<dbReference type="GO" id="GO:0004392">
    <property type="term" value="F:heme oxygenase (decyclizing) activity"/>
    <property type="evidence" value="ECO:0000314"/>
    <property type="project" value="UniProtKB"/>
</dbReference>
<dbReference type="GO" id="GO:0046872">
    <property type="term" value="F:metal ion binding"/>
    <property type="evidence" value="ECO:0007669"/>
    <property type="project" value="UniProtKB-KW"/>
</dbReference>
<dbReference type="GO" id="GO:0042167">
    <property type="term" value="P:heme catabolic process"/>
    <property type="evidence" value="ECO:0000318"/>
    <property type="project" value="GO_Central"/>
</dbReference>
<dbReference type="GO" id="GO:0006788">
    <property type="term" value="P:heme oxidation"/>
    <property type="evidence" value="ECO:0000318"/>
    <property type="project" value="GO_Central"/>
</dbReference>
<dbReference type="GO" id="GO:0001666">
    <property type="term" value="P:response to hypoxia"/>
    <property type="evidence" value="ECO:0000266"/>
    <property type="project" value="RGD"/>
</dbReference>
<dbReference type="GO" id="GO:0006979">
    <property type="term" value="P:response to oxidative stress"/>
    <property type="evidence" value="ECO:0000314"/>
    <property type="project" value="RGD"/>
</dbReference>
<dbReference type="CDD" id="cd19165">
    <property type="entry name" value="HemeO"/>
    <property type="match status" value="1"/>
</dbReference>
<dbReference type="FunFam" id="1.20.910.10:FF:000001">
    <property type="entry name" value="Heme oxygenase 1"/>
    <property type="match status" value="1"/>
</dbReference>
<dbReference type="Gene3D" id="1.20.910.10">
    <property type="entry name" value="Heme oxygenase-like"/>
    <property type="match status" value="1"/>
</dbReference>
<dbReference type="InterPro" id="IPR002051">
    <property type="entry name" value="Haem_Oase"/>
</dbReference>
<dbReference type="InterPro" id="IPR016053">
    <property type="entry name" value="Haem_Oase-like"/>
</dbReference>
<dbReference type="InterPro" id="IPR016084">
    <property type="entry name" value="Haem_Oase-like_multi-hlx"/>
</dbReference>
<dbReference type="InterPro" id="IPR018207">
    <property type="entry name" value="Haem_oxygenase_CS"/>
</dbReference>
<dbReference type="PANTHER" id="PTHR10720">
    <property type="entry name" value="HEME OXYGENASE"/>
    <property type="match status" value="1"/>
</dbReference>
<dbReference type="PANTHER" id="PTHR10720:SF2">
    <property type="entry name" value="HEME OXYGENASE 2"/>
    <property type="match status" value="1"/>
</dbReference>
<dbReference type="Pfam" id="PF01126">
    <property type="entry name" value="Heme_oxygenase"/>
    <property type="match status" value="1"/>
</dbReference>
<dbReference type="PRINTS" id="PR00088">
    <property type="entry name" value="HAEMOXYGNASE"/>
</dbReference>
<dbReference type="SUPFAM" id="SSF48613">
    <property type="entry name" value="Heme oxygenase-like"/>
    <property type="match status" value="1"/>
</dbReference>
<dbReference type="PROSITE" id="PS00593">
    <property type="entry name" value="HEME_OXYGENASE"/>
    <property type="match status" value="1"/>
</dbReference>